<keyword id="KW-0030">Aminoacyl-tRNA synthetase</keyword>
<keyword id="KW-0067">ATP-binding</keyword>
<keyword id="KW-0963">Cytoplasm</keyword>
<keyword id="KW-0436">Ligase</keyword>
<keyword id="KW-0547">Nucleotide-binding</keyword>
<keyword id="KW-0648">Protein biosynthesis</keyword>
<reference key="1">
    <citation type="journal article" date="2006" name="Genome Biol.">
        <title>Genomic analysis reveals that Pseudomonas aeruginosa virulence is combinatorial.</title>
        <authorList>
            <person name="Lee D.G."/>
            <person name="Urbach J.M."/>
            <person name="Wu G."/>
            <person name="Liberati N.T."/>
            <person name="Feinbaum R.L."/>
            <person name="Miyata S."/>
            <person name="Diggins L.T."/>
            <person name="He J."/>
            <person name="Saucier M."/>
            <person name="Deziel E."/>
            <person name="Friedman L."/>
            <person name="Li L."/>
            <person name="Grills G."/>
            <person name="Montgomery K."/>
            <person name="Kucherlapati R."/>
            <person name="Rahme L.G."/>
            <person name="Ausubel F.M."/>
        </authorList>
    </citation>
    <scope>NUCLEOTIDE SEQUENCE [LARGE SCALE GENOMIC DNA]</scope>
    <source>
        <strain>UCBPP-PA14</strain>
    </source>
</reference>
<evidence type="ECO:0000255" key="1">
    <source>
        <dbReference type="HAMAP-Rule" id="MF_01569"/>
    </source>
</evidence>
<comment type="function">
    <text evidence="1">Catalyzes the attachment of proline to tRNA(Pro) in a two-step reaction: proline is first activated by ATP to form Pro-AMP and then transferred to the acceptor end of tRNA(Pro). As ProRS can inadvertently accommodate and process non-cognate amino acids such as alanine and cysteine, to avoid such errors it has two additional distinct editing activities against alanine. One activity is designated as 'pretransfer' editing and involves the tRNA(Pro)-independent hydrolysis of activated Ala-AMP. The other activity is designated 'posttransfer' editing and involves deacylation of mischarged Ala-tRNA(Pro). The misacylated Cys-tRNA(Pro) is not edited by ProRS.</text>
</comment>
<comment type="catalytic activity">
    <reaction evidence="1">
        <text>tRNA(Pro) + L-proline + ATP = L-prolyl-tRNA(Pro) + AMP + diphosphate</text>
        <dbReference type="Rhea" id="RHEA:14305"/>
        <dbReference type="Rhea" id="RHEA-COMP:9700"/>
        <dbReference type="Rhea" id="RHEA-COMP:9702"/>
        <dbReference type="ChEBI" id="CHEBI:30616"/>
        <dbReference type="ChEBI" id="CHEBI:33019"/>
        <dbReference type="ChEBI" id="CHEBI:60039"/>
        <dbReference type="ChEBI" id="CHEBI:78442"/>
        <dbReference type="ChEBI" id="CHEBI:78532"/>
        <dbReference type="ChEBI" id="CHEBI:456215"/>
        <dbReference type="EC" id="6.1.1.15"/>
    </reaction>
</comment>
<comment type="subunit">
    <text evidence="1">Homodimer.</text>
</comment>
<comment type="subcellular location">
    <subcellularLocation>
        <location evidence="1">Cytoplasm</location>
    </subcellularLocation>
</comment>
<comment type="domain">
    <text evidence="1">Consists of three domains: the N-terminal catalytic domain, the editing domain and the C-terminal anticodon-binding domain.</text>
</comment>
<comment type="similarity">
    <text evidence="1">Belongs to the class-II aminoacyl-tRNA synthetase family. ProS type 1 subfamily.</text>
</comment>
<organism>
    <name type="scientific">Pseudomonas aeruginosa (strain UCBPP-PA14)</name>
    <dbReference type="NCBI Taxonomy" id="208963"/>
    <lineage>
        <taxon>Bacteria</taxon>
        <taxon>Pseudomonadati</taxon>
        <taxon>Pseudomonadota</taxon>
        <taxon>Gammaproteobacteria</taxon>
        <taxon>Pseudomonadales</taxon>
        <taxon>Pseudomonadaceae</taxon>
        <taxon>Pseudomonas</taxon>
    </lineage>
</organism>
<dbReference type="EC" id="6.1.1.15" evidence="1"/>
<dbReference type="EMBL" id="CP000438">
    <property type="protein sequence ID" value="ABJ10117.1"/>
    <property type="molecule type" value="Genomic_DNA"/>
</dbReference>
<dbReference type="RefSeq" id="WP_003086089.1">
    <property type="nucleotide sequence ID" value="NZ_CP034244.1"/>
</dbReference>
<dbReference type="SMR" id="Q02IB8"/>
<dbReference type="KEGG" id="pau:PA14_51900"/>
<dbReference type="PseudoCAP" id="PA14_51900"/>
<dbReference type="HOGENOM" id="CLU_016739_0_0_6"/>
<dbReference type="BioCyc" id="PAER208963:G1G74-4366-MONOMER"/>
<dbReference type="Proteomes" id="UP000000653">
    <property type="component" value="Chromosome"/>
</dbReference>
<dbReference type="GO" id="GO:0005829">
    <property type="term" value="C:cytosol"/>
    <property type="evidence" value="ECO:0007669"/>
    <property type="project" value="TreeGrafter"/>
</dbReference>
<dbReference type="GO" id="GO:0002161">
    <property type="term" value="F:aminoacyl-tRNA deacylase activity"/>
    <property type="evidence" value="ECO:0007669"/>
    <property type="project" value="InterPro"/>
</dbReference>
<dbReference type="GO" id="GO:0005524">
    <property type="term" value="F:ATP binding"/>
    <property type="evidence" value="ECO:0007669"/>
    <property type="project" value="UniProtKB-UniRule"/>
</dbReference>
<dbReference type="GO" id="GO:0004827">
    <property type="term" value="F:proline-tRNA ligase activity"/>
    <property type="evidence" value="ECO:0007669"/>
    <property type="project" value="UniProtKB-UniRule"/>
</dbReference>
<dbReference type="GO" id="GO:0006433">
    <property type="term" value="P:prolyl-tRNA aminoacylation"/>
    <property type="evidence" value="ECO:0007669"/>
    <property type="project" value="UniProtKB-UniRule"/>
</dbReference>
<dbReference type="CDD" id="cd04334">
    <property type="entry name" value="ProRS-INS"/>
    <property type="match status" value="1"/>
</dbReference>
<dbReference type="CDD" id="cd00861">
    <property type="entry name" value="ProRS_anticodon_short"/>
    <property type="match status" value="1"/>
</dbReference>
<dbReference type="CDD" id="cd00779">
    <property type="entry name" value="ProRS_core_prok"/>
    <property type="match status" value="1"/>
</dbReference>
<dbReference type="FunFam" id="3.30.930.10:FF:000012">
    <property type="entry name" value="Proline--tRNA ligase"/>
    <property type="match status" value="1"/>
</dbReference>
<dbReference type="FunFam" id="3.30.930.10:FF:000097">
    <property type="entry name" value="Proline--tRNA ligase"/>
    <property type="match status" value="1"/>
</dbReference>
<dbReference type="FunFam" id="3.40.50.800:FF:000006">
    <property type="entry name" value="Proline--tRNA ligase"/>
    <property type="match status" value="1"/>
</dbReference>
<dbReference type="FunFam" id="3.90.960.10:FF:000001">
    <property type="entry name" value="Proline--tRNA ligase"/>
    <property type="match status" value="1"/>
</dbReference>
<dbReference type="Gene3D" id="3.40.50.800">
    <property type="entry name" value="Anticodon-binding domain"/>
    <property type="match status" value="1"/>
</dbReference>
<dbReference type="Gene3D" id="3.30.930.10">
    <property type="entry name" value="Bira Bifunctional Protein, Domain 2"/>
    <property type="match status" value="2"/>
</dbReference>
<dbReference type="Gene3D" id="3.90.960.10">
    <property type="entry name" value="YbaK/aminoacyl-tRNA synthetase-associated domain"/>
    <property type="match status" value="1"/>
</dbReference>
<dbReference type="HAMAP" id="MF_01569">
    <property type="entry name" value="Pro_tRNA_synth_type1"/>
    <property type="match status" value="1"/>
</dbReference>
<dbReference type="InterPro" id="IPR002314">
    <property type="entry name" value="aa-tRNA-synt_IIb"/>
</dbReference>
<dbReference type="InterPro" id="IPR006195">
    <property type="entry name" value="aa-tRNA-synth_II"/>
</dbReference>
<dbReference type="InterPro" id="IPR045864">
    <property type="entry name" value="aa-tRNA-synth_II/BPL/LPL"/>
</dbReference>
<dbReference type="InterPro" id="IPR004154">
    <property type="entry name" value="Anticodon-bd"/>
</dbReference>
<dbReference type="InterPro" id="IPR036621">
    <property type="entry name" value="Anticodon-bd_dom_sf"/>
</dbReference>
<dbReference type="InterPro" id="IPR002316">
    <property type="entry name" value="Pro-tRNA-ligase_IIa"/>
</dbReference>
<dbReference type="InterPro" id="IPR004500">
    <property type="entry name" value="Pro-tRNA-synth_IIa_bac-type"/>
</dbReference>
<dbReference type="InterPro" id="IPR023717">
    <property type="entry name" value="Pro-tRNA-Synthase_IIa_type1"/>
</dbReference>
<dbReference type="InterPro" id="IPR050062">
    <property type="entry name" value="Pro-tRNA_synthetase"/>
</dbReference>
<dbReference type="InterPro" id="IPR044140">
    <property type="entry name" value="ProRS_anticodon_short"/>
</dbReference>
<dbReference type="InterPro" id="IPR033730">
    <property type="entry name" value="ProRS_core_prok"/>
</dbReference>
<dbReference type="InterPro" id="IPR036754">
    <property type="entry name" value="YbaK/aa-tRNA-synt-asso_dom_sf"/>
</dbReference>
<dbReference type="InterPro" id="IPR007214">
    <property type="entry name" value="YbaK/aa-tRNA-synth-assoc-dom"/>
</dbReference>
<dbReference type="NCBIfam" id="NF006625">
    <property type="entry name" value="PRK09194.1"/>
    <property type="match status" value="1"/>
</dbReference>
<dbReference type="NCBIfam" id="TIGR00409">
    <property type="entry name" value="proS_fam_II"/>
    <property type="match status" value="1"/>
</dbReference>
<dbReference type="PANTHER" id="PTHR42753">
    <property type="entry name" value="MITOCHONDRIAL RIBOSOME PROTEIN L39/PROLYL-TRNA LIGASE FAMILY MEMBER"/>
    <property type="match status" value="1"/>
</dbReference>
<dbReference type="PANTHER" id="PTHR42753:SF2">
    <property type="entry name" value="PROLINE--TRNA LIGASE"/>
    <property type="match status" value="1"/>
</dbReference>
<dbReference type="Pfam" id="PF03129">
    <property type="entry name" value="HGTP_anticodon"/>
    <property type="match status" value="1"/>
</dbReference>
<dbReference type="Pfam" id="PF00587">
    <property type="entry name" value="tRNA-synt_2b"/>
    <property type="match status" value="1"/>
</dbReference>
<dbReference type="Pfam" id="PF04073">
    <property type="entry name" value="tRNA_edit"/>
    <property type="match status" value="1"/>
</dbReference>
<dbReference type="PIRSF" id="PIRSF001535">
    <property type="entry name" value="ProRS_1"/>
    <property type="match status" value="1"/>
</dbReference>
<dbReference type="PRINTS" id="PR01046">
    <property type="entry name" value="TRNASYNTHPRO"/>
</dbReference>
<dbReference type="SUPFAM" id="SSF52954">
    <property type="entry name" value="Class II aaRS ABD-related"/>
    <property type="match status" value="1"/>
</dbReference>
<dbReference type="SUPFAM" id="SSF55681">
    <property type="entry name" value="Class II aaRS and biotin synthetases"/>
    <property type="match status" value="1"/>
</dbReference>
<dbReference type="SUPFAM" id="SSF55826">
    <property type="entry name" value="YbaK/ProRS associated domain"/>
    <property type="match status" value="1"/>
</dbReference>
<dbReference type="PROSITE" id="PS50862">
    <property type="entry name" value="AA_TRNA_LIGASE_II"/>
    <property type="match status" value="1"/>
</dbReference>
<accession>Q02IB8</accession>
<feature type="chain" id="PRO_0000288367" description="Proline--tRNA ligase">
    <location>
        <begin position="1"/>
        <end position="571"/>
    </location>
</feature>
<proteinExistence type="inferred from homology"/>
<name>SYP_PSEAB</name>
<gene>
    <name evidence="1" type="primary">proS</name>
    <name type="ordered locus">PA14_51900</name>
</gene>
<sequence>MRTSQYLLSTLKETPADAVVISHQLLLRAGMIRRLASGLYTWLPMGLRVLRKVETIVREEMNAAGALEVLMPAVQPAELWQESGRWEQYGPELLRLKDRHEREFCVGPTHEEVITDLARNELNSYKQLPINFYQIQTKFRDEIRPRFGLMRGREFIMKDAYSFHLSQDSLQQTYDGMYQAYSKIFSRLGLDFRPVQADNGSIGGSGSHEFHVLANSGEDDIVFSDSSDYAANIEKAEAVPRESARGSATEDMRLVDTPNTKTITALVDGFQLPIEKTIKTLVVHGAEEGTLVALIVRGDHELNEIKAANQPLVASPLVFASEAEIRAAIGAGPGSLGPVNLPIACIVDRSVALMSDFAAGANIEDKHYFGVNWERDLPLPEVADLRNVVEGDPSPDGKGTLVIKRGIEVGHIFQLGTKYSEAMKLNVLSEQGKPVNLIMGCYGIGVSRVVAAAIEQNHDERGILWPSALAPFQIALVPLKYETESVKQATDKLYAELTAAGFEVLLDDRDKKTSPGVKFADMELIGIPHRIVISDRGLNEGVLEYKGRRDSESQNLPIGELMSFITEKLSR</sequence>
<protein>
    <recommendedName>
        <fullName evidence="1">Proline--tRNA ligase</fullName>
        <ecNumber evidence="1">6.1.1.15</ecNumber>
    </recommendedName>
    <alternativeName>
        <fullName evidence="1">Prolyl-tRNA synthetase</fullName>
        <shortName evidence="1">ProRS</shortName>
    </alternativeName>
</protein>